<proteinExistence type="inferred from homology"/>
<organism>
    <name type="scientific">Staphylococcus saprophyticus subsp. saprophyticus (strain ATCC 15305 / DSM 20229 / NCIMB 8711 / NCTC 7292 / S-41)</name>
    <dbReference type="NCBI Taxonomy" id="342451"/>
    <lineage>
        <taxon>Bacteria</taxon>
        <taxon>Bacillati</taxon>
        <taxon>Bacillota</taxon>
        <taxon>Bacilli</taxon>
        <taxon>Bacillales</taxon>
        <taxon>Staphylococcaceae</taxon>
        <taxon>Staphylococcus</taxon>
    </lineage>
</organism>
<keyword id="KW-1185">Reference proteome</keyword>
<keyword id="KW-0687">Ribonucleoprotein</keyword>
<keyword id="KW-0689">Ribosomal protein</keyword>
<feature type="chain" id="PRO_0000178557" description="Large ribosomal subunit protein bL28">
    <location>
        <begin position="1"/>
        <end position="62"/>
    </location>
</feature>
<feature type="region of interest" description="Disordered" evidence="2">
    <location>
        <begin position="1"/>
        <end position="24"/>
    </location>
</feature>
<feature type="compositionally biased region" description="Polar residues" evidence="2">
    <location>
        <begin position="11"/>
        <end position="24"/>
    </location>
</feature>
<accession>Q49X05</accession>
<dbReference type="EMBL" id="AP008934">
    <property type="protein sequence ID" value="BAE18693.1"/>
    <property type="molecule type" value="Genomic_DNA"/>
</dbReference>
<dbReference type="RefSeq" id="WP_002483503.1">
    <property type="nucleotide sequence ID" value="NZ_MTGA01000034.1"/>
</dbReference>
<dbReference type="SMR" id="Q49X05"/>
<dbReference type="GeneID" id="97228305"/>
<dbReference type="KEGG" id="ssp:SSP1548"/>
<dbReference type="eggNOG" id="COG0227">
    <property type="taxonomic scope" value="Bacteria"/>
</dbReference>
<dbReference type="HOGENOM" id="CLU_064548_7_1_9"/>
<dbReference type="OrthoDB" id="9805609at2"/>
<dbReference type="Proteomes" id="UP000006371">
    <property type="component" value="Chromosome"/>
</dbReference>
<dbReference type="GO" id="GO:1990904">
    <property type="term" value="C:ribonucleoprotein complex"/>
    <property type="evidence" value="ECO:0007669"/>
    <property type="project" value="UniProtKB-KW"/>
</dbReference>
<dbReference type="GO" id="GO:0005840">
    <property type="term" value="C:ribosome"/>
    <property type="evidence" value="ECO:0007669"/>
    <property type="project" value="UniProtKB-KW"/>
</dbReference>
<dbReference type="GO" id="GO:0003735">
    <property type="term" value="F:structural constituent of ribosome"/>
    <property type="evidence" value="ECO:0007669"/>
    <property type="project" value="InterPro"/>
</dbReference>
<dbReference type="GO" id="GO:0006412">
    <property type="term" value="P:translation"/>
    <property type="evidence" value="ECO:0007669"/>
    <property type="project" value="UniProtKB-UniRule"/>
</dbReference>
<dbReference type="Gene3D" id="2.30.170.40">
    <property type="entry name" value="Ribosomal protein L28/L24"/>
    <property type="match status" value="1"/>
</dbReference>
<dbReference type="HAMAP" id="MF_00373">
    <property type="entry name" value="Ribosomal_bL28"/>
    <property type="match status" value="1"/>
</dbReference>
<dbReference type="InterPro" id="IPR050096">
    <property type="entry name" value="Bacterial_rp_bL28"/>
</dbReference>
<dbReference type="InterPro" id="IPR026569">
    <property type="entry name" value="Ribosomal_bL28"/>
</dbReference>
<dbReference type="InterPro" id="IPR034704">
    <property type="entry name" value="Ribosomal_bL28/bL31-like_sf"/>
</dbReference>
<dbReference type="InterPro" id="IPR001383">
    <property type="entry name" value="Ribosomal_bL28_bact-type"/>
</dbReference>
<dbReference type="InterPro" id="IPR037147">
    <property type="entry name" value="Ribosomal_bL28_sf"/>
</dbReference>
<dbReference type="NCBIfam" id="TIGR00009">
    <property type="entry name" value="L28"/>
    <property type="match status" value="1"/>
</dbReference>
<dbReference type="PANTHER" id="PTHR39080">
    <property type="entry name" value="50S RIBOSOMAL PROTEIN L28"/>
    <property type="match status" value="1"/>
</dbReference>
<dbReference type="PANTHER" id="PTHR39080:SF1">
    <property type="entry name" value="LARGE RIBOSOMAL SUBUNIT PROTEIN BL28A"/>
    <property type="match status" value="1"/>
</dbReference>
<dbReference type="Pfam" id="PF00830">
    <property type="entry name" value="Ribosomal_L28"/>
    <property type="match status" value="1"/>
</dbReference>
<dbReference type="SUPFAM" id="SSF143800">
    <property type="entry name" value="L28p-like"/>
    <property type="match status" value="1"/>
</dbReference>
<name>RL28_STAS1</name>
<reference key="1">
    <citation type="journal article" date="2005" name="Proc. Natl. Acad. Sci. U.S.A.">
        <title>Whole genome sequence of Staphylococcus saprophyticus reveals the pathogenesis of uncomplicated urinary tract infection.</title>
        <authorList>
            <person name="Kuroda M."/>
            <person name="Yamashita A."/>
            <person name="Hirakawa H."/>
            <person name="Kumano M."/>
            <person name="Morikawa K."/>
            <person name="Higashide M."/>
            <person name="Maruyama A."/>
            <person name="Inose Y."/>
            <person name="Matoba K."/>
            <person name="Toh H."/>
            <person name="Kuhara S."/>
            <person name="Hattori M."/>
            <person name="Ohta T."/>
        </authorList>
    </citation>
    <scope>NUCLEOTIDE SEQUENCE [LARGE SCALE GENOMIC DNA]</scope>
    <source>
        <strain>ATCC 15305 / DSM 20229 / NCIMB 8711 / NCTC 7292 / S-41</strain>
    </source>
</reference>
<evidence type="ECO:0000255" key="1">
    <source>
        <dbReference type="HAMAP-Rule" id="MF_00373"/>
    </source>
</evidence>
<evidence type="ECO:0000256" key="2">
    <source>
        <dbReference type="SAM" id="MobiDB-lite"/>
    </source>
</evidence>
<evidence type="ECO:0000305" key="3"/>
<gene>
    <name evidence="1" type="primary">rpmB</name>
    <name type="ordered locus">SSP1548</name>
</gene>
<protein>
    <recommendedName>
        <fullName evidence="1">Large ribosomal subunit protein bL28</fullName>
    </recommendedName>
    <alternativeName>
        <fullName evidence="3">50S ribosomal protein L28</fullName>
    </alternativeName>
</protein>
<sequence>MGKQCFVTGRKASTGNNRSHALNSSKRRWNANLQKVRILVDGKPKKVWVSARALKSGKVTRV</sequence>
<comment type="similarity">
    <text evidence="1">Belongs to the bacterial ribosomal protein bL28 family.</text>
</comment>